<evidence type="ECO:0000255" key="1">
    <source>
        <dbReference type="HAMAP-Rule" id="MF_01011"/>
    </source>
</evidence>
<proteinExistence type="inferred from homology"/>
<gene>
    <name evidence="1" type="primary">trmA</name>
    <name type="ordered locus">CHAB381_1374</name>
</gene>
<keyword id="KW-0489">Methyltransferase</keyword>
<keyword id="KW-1185">Reference proteome</keyword>
<keyword id="KW-0949">S-adenosyl-L-methionine</keyword>
<keyword id="KW-0808">Transferase</keyword>
<keyword id="KW-0819">tRNA processing</keyword>
<accession>A7I332</accession>
<comment type="function">
    <text evidence="1">Dual-specificity methyltransferase that catalyzes the formation of 5-methyluridine at position 54 (m5U54) in all tRNAs, and that of position 341 (m5U341) in tmRNA (transfer-mRNA).</text>
</comment>
<comment type="catalytic activity">
    <reaction evidence="1">
        <text>uridine(54) in tRNA + S-adenosyl-L-methionine = 5-methyluridine(54) in tRNA + S-adenosyl-L-homocysteine + H(+)</text>
        <dbReference type="Rhea" id="RHEA:42712"/>
        <dbReference type="Rhea" id="RHEA-COMP:10167"/>
        <dbReference type="Rhea" id="RHEA-COMP:10193"/>
        <dbReference type="ChEBI" id="CHEBI:15378"/>
        <dbReference type="ChEBI" id="CHEBI:57856"/>
        <dbReference type="ChEBI" id="CHEBI:59789"/>
        <dbReference type="ChEBI" id="CHEBI:65315"/>
        <dbReference type="ChEBI" id="CHEBI:74447"/>
        <dbReference type="EC" id="2.1.1.35"/>
    </reaction>
</comment>
<comment type="catalytic activity">
    <reaction evidence="1">
        <text>uridine(341) in tmRNA + S-adenosyl-L-methionine = 5-methyluridine(341) in tmRNA + S-adenosyl-L-homocysteine + H(+)</text>
        <dbReference type="Rhea" id="RHEA:43612"/>
        <dbReference type="Rhea" id="RHEA-COMP:10630"/>
        <dbReference type="Rhea" id="RHEA-COMP:10631"/>
        <dbReference type="ChEBI" id="CHEBI:15378"/>
        <dbReference type="ChEBI" id="CHEBI:57856"/>
        <dbReference type="ChEBI" id="CHEBI:59789"/>
        <dbReference type="ChEBI" id="CHEBI:65315"/>
        <dbReference type="ChEBI" id="CHEBI:74447"/>
    </reaction>
</comment>
<comment type="similarity">
    <text evidence="1">Belongs to the class I-like SAM-binding methyltransferase superfamily. RNA M5U methyltransferase family. TrmA subfamily.</text>
</comment>
<dbReference type="EC" id="2.1.1.-" evidence="1"/>
<dbReference type="EC" id="2.1.1.35" evidence="1"/>
<dbReference type="EMBL" id="CP000776">
    <property type="protein sequence ID" value="ABS50990.1"/>
    <property type="molecule type" value="Genomic_DNA"/>
</dbReference>
<dbReference type="RefSeq" id="WP_012109226.1">
    <property type="nucleotide sequence ID" value="NC_009714.1"/>
</dbReference>
<dbReference type="SMR" id="A7I332"/>
<dbReference type="STRING" id="360107.CHAB381_1374"/>
<dbReference type="KEGG" id="cha:CHAB381_1374"/>
<dbReference type="eggNOG" id="COG2265">
    <property type="taxonomic scope" value="Bacteria"/>
</dbReference>
<dbReference type="HOGENOM" id="CLU_043022_0_0_7"/>
<dbReference type="OrthoDB" id="9804590at2"/>
<dbReference type="Proteomes" id="UP000002407">
    <property type="component" value="Chromosome"/>
</dbReference>
<dbReference type="GO" id="GO:0005829">
    <property type="term" value="C:cytosol"/>
    <property type="evidence" value="ECO:0007669"/>
    <property type="project" value="TreeGrafter"/>
</dbReference>
<dbReference type="GO" id="GO:0019843">
    <property type="term" value="F:rRNA binding"/>
    <property type="evidence" value="ECO:0007669"/>
    <property type="project" value="TreeGrafter"/>
</dbReference>
<dbReference type="GO" id="GO:0030697">
    <property type="term" value="F:tRNA (uracil(54)-C5)-methyltransferase activity, S-adenosyl methionine-dependent"/>
    <property type="evidence" value="ECO:0007669"/>
    <property type="project" value="UniProtKB-EC"/>
</dbReference>
<dbReference type="GO" id="GO:0000049">
    <property type="term" value="F:tRNA binding"/>
    <property type="evidence" value="ECO:0007669"/>
    <property type="project" value="TreeGrafter"/>
</dbReference>
<dbReference type="GO" id="GO:0032259">
    <property type="term" value="P:methylation"/>
    <property type="evidence" value="ECO:0007669"/>
    <property type="project" value="UniProtKB-KW"/>
</dbReference>
<dbReference type="GO" id="GO:0008033">
    <property type="term" value="P:tRNA processing"/>
    <property type="evidence" value="ECO:0007669"/>
    <property type="project" value="UniProtKB-KW"/>
</dbReference>
<dbReference type="CDD" id="cd02440">
    <property type="entry name" value="AdoMet_MTases"/>
    <property type="match status" value="1"/>
</dbReference>
<dbReference type="Gene3D" id="2.40.50.1070">
    <property type="match status" value="1"/>
</dbReference>
<dbReference type="Gene3D" id="3.40.50.150">
    <property type="entry name" value="Vaccinia Virus protein VP39"/>
    <property type="match status" value="1"/>
</dbReference>
<dbReference type="HAMAP" id="MF_01011">
    <property type="entry name" value="RNA_methyltr_TrmA"/>
    <property type="match status" value="1"/>
</dbReference>
<dbReference type="InterPro" id="IPR030390">
    <property type="entry name" value="MeTrfase_TrmA_AS"/>
</dbReference>
<dbReference type="InterPro" id="IPR029063">
    <property type="entry name" value="SAM-dependent_MTases_sf"/>
</dbReference>
<dbReference type="InterPro" id="IPR011869">
    <property type="entry name" value="TrmA_MeTrfase"/>
</dbReference>
<dbReference type="InterPro" id="IPR010280">
    <property type="entry name" value="U5_MeTrfase_fam"/>
</dbReference>
<dbReference type="NCBIfam" id="TIGR02143">
    <property type="entry name" value="trmA_only"/>
    <property type="match status" value="1"/>
</dbReference>
<dbReference type="PANTHER" id="PTHR47790">
    <property type="entry name" value="TRNA/TMRNA (URACIL-C(5))-METHYLTRANSFERASE"/>
    <property type="match status" value="1"/>
</dbReference>
<dbReference type="PANTHER" id="PTHR47790:SF2">
    <property type="entry name" value="TRNA_TMRNA (URACIL-C(5))-METHYLTRANSFERASE"/>
    <property type="match status" value="1"/>
</dbReference>
<dbReference type="Pfam" id="PF05958">
    <property type="entry name" value="tRNA_U5-meth_tr"/>
    <property type="match status" value="1"/>
</dbReference>
<dbReference type="SUPFAM" id="SSF53335">
    <property type="entry name" value="S-adenosyl-L-methionine-dependent methyltransferases"/>
    <property type="match status" value="1"/>
</dbReference>
<dbReference type="PROSITE" id="PS51687">
    <property type="entry name" value="SAM_MT_RNA_M5U"/>
    <property type="match status" value="1"/>
</dbReference>
<dbReference type="PROSITE" id="PS01230">
    <property type="entry name" value="TRMA_1"/>
    <property type="match status" value="1"/>
</dbReference>
<organism>
    <name type="scientific">Campylobacter hominis (strain ATCC BAA-381 / DSM 21671 / CCUG 45161 / LMG 19568 / NCTC 13146 / CH001A)</name>
    <dbReference type="NCBI Taxonomy" id="360107"/>
    <lineage>
        <taxon>Bacteria</taxon>
        <taxon>Pseudomonadati</taxon>
        <taxon>Campylobacterota</taxon>
        <taxon>Epsilonproteobacteria</taxon>
        <taxon>Campylobacterales</taxon>
        <taxon>Campylobacteraceae</taxon>
        <taxon>Campylobacter</taxon>
    </lineage>
</organism>
<reference key="1">
    <citation type="submission" date="2007-07" db="EMBL/GenBank/DDBJ databases">
        <title>Complete genome sequence of Campylobacter hominis ATCC BAA-381, a commensal isolated from the human gastrointestinal tract.</title>
        <authorList>
            <person name="Fouts D.E."/>
            <person name="Mongodin E.F."/>
            <person name="Puiu D."/>
            <person name="Sebastian Y."/>
            <person name="Miller W.G."/>
            <person name="Mandrell R.E."/>
            <person name="Nelson K.E."/>
        </authorList>
    </citation>
    <scope>NUCLEOTIDE SEQUENCE [LARGE SCALE GENOMIC DNA]</scope>
    <source>
        <strain>ATCC BAA-381 / DSM 21671 / CCUG 45161 / LMG 19568 / NCTC 13146 / CH001A</strain>
    </source>
</reference>
<feature type="chain" id="PRO_0000388549" description="tRNA/tmRNA (uracil-C(5))-methyltransferase">
    <location>
        <begin position="1"/>
        <end position="357"/>
    </location>
</feature>
<feature type="active site" description="Nucleophile" evidence="1">
    <location>
        <position position="316"/>
    </location>
</feature>
<feature type="active site" description="Proton acceptor" evidence="1">
    <location>
        <position position="350"/>
    </location>
</feature>
<feature type="binding site" evidence="1">
    <location>
        <position position="185"/>
    </location>
    <ligand>
        <name>S-adenosyl-L-methionine</name>
        <dbReference type="ChEBI" id="CHEBI:59789"/>
    </ligand>
</feature>
<feature type="binding site" evidence="1">
    <location>
        <position position="212"/>
    </location>
    <ligand>
        <name>S-adenosyl-L-methionine</name>
        <dbReference type="ChEBI" id="CHEBI:59789"/>
    </ligand>
</feature>
<feature type="binding site" evidence="1">
    <location>
        <position position="217"/>
    </location>
    <ligand>
        <name>S-adenosyl-L-methionine</name>
        <dbReference type="ChEBI" id="CHEBI:59789"/>
    </ligand>
</feature>
<feature type="binding site" evidence="1">
    <location>
        <position position="233"/>
    </location>
    <ligand>
        <name>S-adenosyl-L-methionine</name>
        <dbReference type="ChEBI" id="CHEBI:59789"/>
    </ligand>
</feature>
<feature type="binding site" evidence="1">
    <location>
        <position position="291"/>
    </location>
    <ligand>
        <name>S-adenosyl-L-methionine</name>
        <dbReference type="ChEBI" id="CHEBI:59789"/>
    </ligand>
</feature>
<protein>
    <recommendedName>
        <fullName evidence="1">tRNA/tmRNA (uracil-C(5))-methyltransferase</fullName>
        <ecNumber evidence="1">2.1.1.-</ecNumber>
        <ecNumber evidence="1">2.1.1.35</ecNumber>
    </recommendedName>
    <alternativeName>
        <fullName evidence="1">tRNA (uracil(54)-C(5))-methyltransferase</fullName>
    </alternativeName>
    <alternativeName>
        <fullName evidence="1">tRNA(m5U54)-methyltransferase</fullName>
        <shortName evidence="1">RUMT</shortName>
    </alternativeName>
    <alternativeName>
        <fullName evidence="1">tmRNA (uracil(341)-C(5))-methyltransferase</fullName>
    </alternativeName>
</protein>
<name>TRMA_CAMHC</name>
<sequence length="357" mass="41572">MSCSYYGKCAGCNLNLPYNDEISFKTDFLKSEFKEFYQGEIEIFKSDEWNFRNHAEFGIWHEKGDVFYTMRGNSNERVKIETCPKMDKKIVEMMPKLLQNLRENKNLKERLFGIEFIATKFDFMAILLYHKDIFNIKDDLAKLAEILDIKISARSRGKFLNFGGEILREKVQNFIYRFNADAFFQSNTKVNEKMILFVLNAVKNGKDLLEMYCGHGNFTLPLASEFGKILANEISKNSIKNARENSKNKDNINFVRMSAKELIDAFNGVREFNRLKDIDITDFDFSHVLVDPPRAGIEPEVLDFIQNFKNIIYISCNPASLKQNLQILCETHKITKFALFDQFVHTEHIECGVVLQK</sequence>